<feature type="chain" id="PRO_0000241905" description="Orotidine 5'-phosphate decarboxylase">
    <location>
        <begin position="1"/>
        <end position="245"/>
    </location>
</feature>
<feature type="active site" description="Proton donor" evidence="1">
    <location>
        <position position="73"/>
    </location>
</feature>
<feature type="binding site" evidence="1">
    <location>
        <position position="22"/>
    </location>
    <ligand>
        <name>substrate</name>
    </ligand>
</feature>
<feature type="binding site" evidence="1">
    <location>
        <position position="44"/>
    </location>
    <ligand>
        <name>substrate</name>
    </ligand>
</feature>
<feature type="binding site" evidence="1">
    <location>
        <begin position="71"/>
        <end position="80"/>
    </location>
    <ligand>
        <name>substrate</name>
    </ligand>
</feature>
<feature type="binding site" evidence="1">
    <location>
        <position position="131"/>
    </location>
    <ligand>
        <name>substrate</name>
    </ligand>
</feature>
<feature type="binding site" evidence="1">
    <location>
        <position position="192"/>
    </location>
    <ligand>
        <name>substrate</name>
    </ligand>
</feature>
<feature type="binding site" evidence="1">
    <location>
        <position position="201"/>
    </location>
    <ligand>
        <name>substrate</name>
    </ligand>
</feature>
<feature type="binding site" evidence="1">
    <location>
        <position position="221"/>
    </location>
    <ligand>
        <name>substrate</name>
    </ligand>
</feature>
<feature type="binding site" evidence="1">
    <location>
        <position position="222"/>
    </location>
    <ligand>
        <name>substrate</name>
    </ligand>
</feature>
<keyword id="KW-0210">Decarboxylase</keyword>
<keyword id="KW-0456">Lyase</keyword>
<keyword id="KW-0665">Pyrimidine biosynthesis</keyword>
<proteinExistence type="inferred from homology"/>
<protein>
    <recommendedName>
        <fullName evidence="1">Orotidine 5'-phosphate decarboxylase</fullName>
        <ecNumber evidence="1">4.1.1.23</ecNumber>
    </recommendedName>
    <alternativeName>
        <fullName evidence="1">OMP decarboxylase</fullName>
        <shortName evidence="1">OMPDCase</shortName>
        <shortName evidence="1">OMPdecase</shortName>
    </alternativeName>
</protein>
<organism>
    <name type="scientific">Shigella boydii serotype 4 (strain Sb227)</name>
    <dbReference type="NCBI Taxonomy" id="300268"/>
    <lineage>
        <taxon>Bacteria</taxon>
        <taxon>Pseudomonadati</taxon>
        <taxon>Pseudomonadota</taxon>
        <taxon>Gammaproteobacteria</taxon>
        <taxon>Enterobacterales</taxon>
        <taxon>Enterobacteriaceae</taxon>
        <taxon>Shigella</taxon>
    </lineage>
</organism>
<sequence>MTLTASSSSRAVTNSPVVVALDYHNRDDALSFVDKIDPRDCRLKVGKEMFTLFGPQFVRELQQRGFDIFLDLKFHDIPNTAAHAVAAAADLGVWMVNVHASGGARMMTAAREALVPFGKDAPLLIAVTVLTSMEASDLADLGVTLSPADYAERLAALTQKCGLDGVVCSAQEAVRFKQVFGQEFKLVTPGIRPQGSDAGDQRRIMTPEQALAAGVDYMVIGRPVTQSVDPAQTLKAINASLQRSA</sequence>
<comment type="function">
    <text evidence="1">Catalyzes the decarboxylation of orotidine 5'-monophosphate (OMP) to uridine 5'-monophosphate (UMP).</text>
</comment>
<comment type="catalytic activity">
    <reaction evidence="1">
        <text>orotidine 5'-phosphate + H(+) = UMP + CO2</text>
        <dbReference type="Rhea" id="RHEA:11596"/>
        <dbReference type="ChEBI" id="CHEBI:15378"/>
        <dbReference type="ChEBI" id="CHEBI:16526"/>
        <dbReference type="ChEBI" id="CHEBI:57538"/>
        <dbReference type="ChEBI" id="CHEBI:57865"/>
        <dbReference type="EC" id="4.1.1.23"/>
    </reaction>
</comment>
<comment type="pathway">
    <text evidence="1">Pyrimidine metabolism; UMP biosynthesis via de novo pathway; UMP from orotate: step 2/2.</text>
</comment>
<comment type="subunit">
    <text evidence="1">Homodimer.</text>
</comment>
<comment type="similarity">
    <text evidence="1">Belongs to the OMP decarboxylase family. Type 1 subfamily.</text>
</comment>
<reference key="1">
    <citation type="journal article" date="2005" name="Nucleic Acids Res.">
        <title>Genome dynamics and diversity of Shigella species, the etiologic agents of bacillary dysentery.</title>
        <authorList>
            <person name="Yang F."/>
            <person name="Yang J."/>
            <person name="Zhang X."/>
            <person name="Chen L."/>
            <person name="Jiang Y."/>
            <person name="Yan Y."/>
            <person name="Tang X."/>
            <person name="Wang J."/>
            <person name="Xiong Z."/>
            <person name="Dong J."/>
            <person name="Xue Y."/>
            <person name="Zhu Y."/>
            <person name="Xu X."/>
            <person name="Sun L."/>
            <person name="Chen S."/>
            <person name="Nie H."/>
            <person name="Peng J."/>
            <person name="Xu J."/>
            <person name="Wang Y."/>
            <person name="Yuan Z."/>
            <person name="Wen Y."/>
            <person name="Yao Z."/>
            <person name="Shen Y."/>
            <person name="Qiang B."/>
            <person name="Hou Y."/>
            <person name="Yu J."/>
            <person name="Jin Q."/>
        </authorList>
    </citation>
    <scope>NUCLEOTIDE SEQUENCE [LARGE SCALE GENOMIC DNA]</scope>
    <source>
        <strain>Sb227</strain>
    </source>
</reference>
<evidence type="ECO:0000255" key="1">
    <source>
        <dbReference type="HAMAP-Rule" id="MF_01200"/>
    </source>
</evidence>
<name>PYRF_SHIBS</name>
<accession>Q31ZX5</accession>
<gene>
    <name evidence="1" type="primary">pyrF</name>
    <name type="ordered locus">SBO_1783</name>
</gene>
<dbReference type="EC" id="4.1.1.23" evidence="1"/>
<dbReference type="EMBL" id="CP000036">
    <property type="protein sequence ID" value="ABB66383.1"/>
    <property type="molecule type" value="Genomic_DNA"/>
</dbReference>
<dbReference type="RefSeq" id="WP_000176275.1">
    <property type="nucleotide sequence ID" value="NC_007613.1"/>
</dbReference>
<dbReference type="SMR" id="Q31ZX5"/>
<dbReference type="KEGG" id="sbo:SBO_1783"/>
<dbReference type="HOGENOM" id="CLU_067069_0_0_6"/>
<dbReference type="UniPathway" id="UPA00070">
    <property type="reaction ID" value="UER00120"/>
</dbReference>
<dbReference type="Proteomes" id="UP000007067">
    <property type="component" value="Chromosome"/>
</dbReference>
<dbReference type="GO" id="GO:0005829">
    <property type="term" value="C:cytosol"/>
    <property type="evidence" value="ECO:0007669"/>
    <property type="project" value="TreeGrafter"/>
</dbReference>
<dbReference type="GO" id="GO:0004590">
    <property type="term" value="F:orotidine-5'-phosphate decarboxylase activity"/>
    <property type="evidence" value="ECO:0007669"/>
    <property type="project" value="UniProtKB-UniRule"/>
</dbReference>
<dbReference type="GO" id="GO:0006207">
    <property type="term" value="P:'de novo' pyrimidine nucleobase biosynthetic process"/>
    <property type="evidence" value="ECO:0007669"/>
    <property type="project" value="InterPro"/>
</dbReference>
<dbReference type="GO" id="GO:0044205">
    <property type="term" value="P:'de novo' UMP biosynthetic process"/>
    <property type="evidence" value="ECO:0007669"/>
    <property type="project" value="UniProtKB-UniRule"/>
</dbReference>
<dbReference type="CDD" id="cd04725">
    <property type="entry name" value="OMP_decarboxylase_like"/>
    <property type="match status" value="1"/>
</dbReference>
<dbReference type="FunFam" id="3.20.20.70:FF:000015">
    <property type="entry name" value="Orotidine 5'-phosphate decarboxylase"/>
    <property type="match status" value="1"/>
</dbReference>
<dbReference type="Gene3D" id="3.20.20.70">
    <property type="entry name" value="Aldolase class I"/>
    <property type="match status" value="1"/>
</dbReference>
<dbReference type="HAMAP" id="MF_01200_B">
    <property type="entry name" value="OMPdecase_type1_B"/>
    <property type="match status" value="1"/>
</dbReference>
<dbReference type="InterPro" id="IPR013785">
    <property type="entry name" value="Aldolase_TIM"/>
</dbReference>
<dbReference type="InterPro" id="IPR014732">
    <property type="entry name" value="OMPdecase"/>
</dbReference>
<dbReference type="InterPro" id="IPR018089">
    <property type="entry name" value="OMPdecase_AS"/>
</dbReference>
<dbReference type="InterPro" id="IPR047596">
    <property type="entry name" value="OMPdecase_bac"/>
</dbReference>
<dbReference type="InterPro" id="IPR001754">
    <property type="entry name" value="OMPdeCOase_dom"/>
</dbReference>
<dbReference type="InterPro" id="IPR011060">
    <property type="entry name" value="RibuloseP-bd_barrel"/>
</dbReference>
<dbReference type="NCBIfam" id="NF001273">
    <property type="entry name" value="PRK00230.1"/>
    <property type="match status" value="1"/>
</dbReference>
<dbReference type="NCBIfam" id="TIGR01740">
    <property type="entry name" value="pyrF"/>
    <property type="match status" value="1"/>
</dbReference>
<dbReference type="PANTHER" id="PTHR32119">
    <property type="entry name" value="OROTIDINE 5'-PHOSPHATE DECARBOXYLASE"/>
    <property type="match status" value="1"/>
</dbReference>
<dbReference type="PANTHER" id="PTHR32119:SF2">
    <property type="entry name" value="OROTIDINE 5'-PHOSPHATE DECARBOXYLASE"/>
    <property type="match status" value="1"/>
</dbReference>
<dbReference type="Pfam" id="PF00215">
    <property type="entry name" value="OMPdecase"/>
    <property type="match status" value="1"/>
</dbReference>
<dbReference type="SMART" id="SM00934">
    <property type="entry name" value="OMPdecase"/>
    <property type="match status" value="1"/>
</dbReference>
<dbReference type="SUPFAM" id="SSF51366">
    <property type="entry name" value="Ribulose-phoshate binding barrel"/>
    <property type="match status" value="1"/>
</dbReference>
<dbReference type="PROSITE" id="PS00156">
    <property type="entry name" value="OMPDECASE"/>
    <property type="match status" value="1"/>
</dbReference>